<feature type="signal peptide" evidence="2">
    <location>
        <begin position="1"/>
        <end position="22"/>
    </location>
</feature>
<feature type="chain" id="PRO_5040547531" description="Acid phosphatase A">
    <location>
        <begin position="23"/>
        <end position="504"/>
    </location>
</feature>
<feature type="glycosylation site" description="N-linked (GlcNAc...) asparagine" evidence="3">
    <location>
        <position position="84"/>
    </location>
</feature>
<feature type="glycosylation site" description="N-linked (GlcNAc...) asparagine" evidence="3">
    <location>
        <position position="112"/>
    </location>
</feature>
<feature type="glycosylation site" description="N-linked (GlcNAc...) asparagine" evidence="3">
    <location>
        <position position="168"/>
    </location>
</feature>
<feature type="glycosylation site" description="N-linked (GlcNAc...) asparagine" evidence="3">
    <location>
        <position position="260"/>
    </location>
</feature>
<feature type="glycosylation site" description="N-linked (GlcNAc...) asparagine" evidence="3">
    <location>
        <position position="415"/>
    </location>
</feature>
<feature type="glycosylation site" description="N-linked (GlcNAc...) asparagine" evidence="3">
    <location>
        <position position="450"/>
    </location>
</feature>
<feature type="glycosylation site" description="N-linked (GlcNAc...) asparagine" evidence="3">
    <location>
        <position position="474"/>
    </location>
</feature>
<name>APHA_CRYP1</name>
<reference key="1">
    <citation type="journal article" date="2020" name="Phytopathology">
        <title>Genome sequence of the chestnut blight fungus Cryphonectria parasitica EP155: A fundamental resource for an archetypical invasive plant pathogen.</title>
        <authorList>
            <person name="Crouch J.A."/>
            <person name="Dawe A."/>
            <person name="Aerts A."/>
            <person name="Barry K."/>
            <person name="Churchill A.C.L."/>
            <person name="Grimwood J."/>
            <person name="Hillman B."/>
            <person name="Milgroom M.G."/>
            <person name="Pangilinan J."/>
            <person name="Smith M."/>
            <person name="Salamov A."/>
            <person name="Schmutz J."/>
            <person name="Yadav J."/>
            <person name="Grigoriev I.V."/>
            <person name="Nuss D."/>
        </authorList>
    </citation>
    <scope>NUCLEOTIDE SEQUENCE [LARGE SCALE GENOMIC DNA]</scope>
    <source>
        <strain>ATCC 38755 / EP155</strain>
    </source>
</reference>
<reference key="2">
    <citation type="journal article" date="2024" name="PLoS Pathog.">
        <title>N6-methyladenosine RNA methyltransferase CpMTA1 mediates CpAphA mRNA stability through a YTHDF1-dependent m6A modification in the chestnut blight fungus.</title>
        <authorList>
            <person name="Zhao L."/>
            <person name="Wei X."/>
            <person name="Chen F."/>
            <person name="Yuan L."/>
            <person name="Chen B."/>
            <person name="Li R."/>
        </authorList>
    </citation>
    <scope>FUNCTION</scope>
    <scope>DISRUPTION PHENOTYPE</scope>
    <scope>INDUCTION</scope>
</reference>
<proteinExistence type="evidence at transcript level"/>
<sequence>MYTLLDILKGLPLLAVAAIASADYPTIPSDLTTPVQQRLAISGMNSVSVGWNTYEKLLKPCVQYGTSSTDLSQETCSLISTTYNTSRTWSNTVILTDLTPATTYYYQIVSTNSTVNSFFSPRTPGDKSPFTTSVVIDLGVYGADGFTVDADGDPTRKVLIPEVEPALNHTTIGRLADTWDDYEWVLHPGDFGYADDWYLTPTNVGDGVNAYEAILENFYDQLAPIAGGKVYMASPGNHEADCEELGTPAIELSCPEGQKNFTDFNVRFGKNMPTSFSSTSSNTKAKVNANKAAALANPPFWYSFEYGMVHVTMIDTETDFPNAPDAPFGTAGLDGGPFGYTGQQLDFFEADLASVDRTVTPWLLVAGHRPWYSTGGQSNICSACKTAFEPLMYQYGVDLGVFGHVHNSQRFAPVNNSVVDPAGMDNPTAPMYIIAGGAGNIEGLSSVGNNISSNRFAYAETFSYATLTFEDENNLSIQFIESATGDILDSSTLYKAHTEQFVNQ</sequence>
<comment type="function">
    <text evidence="4">Acid phosphatase involved in the regulation of fungal phenotypic traits and virulence in C.parasitica.</text>
</comment>
<comment type="catalytic activity">
    <reaction evidence="1">
        <text>a phosphate monoester + H2O = an alcohol + phosphate</text>
        <dbReference type="Rhea" id="RHEA:15017"/>
        <dbReference type="ChEBI" id="CHEBI:15377"/>
        <dbReference type="ChEBI" id="CHEBI:30879"/>
        <dbReference type="ChEBI" id="CHEBI:43474"/>
        <dbReference type="ChEBI" id="CHEBI:67140"/>
        <dbReference type="EC" id="3.1.3.2"/>
    </reaction>
</comment>
<comment type="subunit">
    <text evidence="1">Monomer.</text>
</comment>
<comment type="subcellular location">
    <subcellularLocation>
        <location evidence="1">Secreted</location>
    </subcellularLocation>
</comment>
<comment type="induction">
    <text evidence="4">Methylation at positions A1306, A1341 and A1666 of the APHA mRNA is regulated by the MTA1 methyltransferase and controls its stability and subsequent translation.</text>
</comment>
<comment type="disruption phenotype">
    <text evidence="4">Leads to the up-regulation of genes involved in biosynthesis of amino acids, ABC transporters, and metabolic pathways; and down-regulation of genes involved in DNA replication, cell cycle, meiosis, and mismatch repair.</text>
</comment>
<comment type="similarity">
    <text evidence="6">Belongs to the metallophosphoesterase superfamily. Purple acid phosphatase family.</text>
</comment>
<gene>
    <name evidence="5" type="primary">APHA</name>
    <name type="ORF">M406DRAFT_348724</name>
</gene>
<dbReference type="EC" id="3.1.3.2" evidence="4"/>
<dbReference type="EMBL" id="MU032344">
    <property type="protein sequence ID" value="KAF3769446.1"/>
    <property type="molecule type" value="Genomic_DNA"/>
</dbReference>
<dbReference type="Proteomes" id="UP000803844">
    <property type="component" value="Unassembled WGS sequence"/>
</dbReference>
<dbReference type="GO" id="GO:0005576">
    <property type="term" value="C:extracellular region"/>
    <property type="evidence" value="ECO:0007669"/>
    <property type="project" value="UniProtKB-SubCell"/>
</dbReference>
<dbReference type="GO" id="GO:0003993">
    <property type="term" value="F:acid phosphatase activity"/>
    <property type="evidence" value="ECO:0007669"/>
    <property type="project" value="InterPro"/>
</dbReference>
<dbReference type="GO" id="GO:0046872">
    <property type="term" value="F:metal ion binding"/>
    <property type="evidence" value="ECO:0007669"/>
    <property type="project" value="InterPro"/>
</dbReference>
<dbReference type="CDD" id="cd00839">
    <property type="entry name" value="MPP_PAPs"/>
    <property type="match status" value="1"/>
</dbReference>
<dbReference type="Gene3D" id="3.60.21.10">
    <property type="match status" value="1"/>
</dbReference>
<dbReference type="Gene3D" id="2.60.40.380">
    <property type="entry name" value="Purple acid phosphatase-like, N-terminal"/>
    <property type="match status" value="1"/>
</dbReference>
<dbReference type="InterPro" id="IPR004843">
    <property type="entry name" value="Calcineurin-like_PHP_ApaH"/>
</dbReference>
<dbReference type="InterPro" id="IPR029052">
    <property type="entry name" value="Metallo-depent_PP-like"/>
</dbReference>
<dbReference type="InterPro" id="IPR041792">
    <property type="entry name" value="MPP_PAP"/>
</dbReference>
<dbReference type="InterPro" id="IPR039331">
    <property type="entry name" value="PPA-like"/>
</dbReference>
<dbReference type="InterPro" id="IPR008963">
    <property type="entry name" value="Purple_acid_Pase-like_N"/>
</dbReference>
<dbReference type="InterPro" id="IPR015914">
    <property type="entry name" value="Purple_acid_Pase_N"/>
</dbReference>
<dbReference type="InterPro" id="IPR025733">
    <property type="entry name" value="Purple_acid_PPase_C_dom"/>
</dbReference>
<dbReference type="PANTHER" id="PTHR22953">
    <property type="entry name" value="ACID PHOSPHATASE RELATED"/>
    <property type="match status" value="1"/>
</dbReference>
<dbReference type="PANTHER" id="PTHR22953:SF153">
    <property type="entry name" value="PURPLE ACID PHOSPHATASE"/>
    <property type="match status" value="1"/>
</dbReference>
<dbReference type="Pfam" id="PF00149">
    <property type="entry name" value="Metallophos"/>
    <property type="match status" value="1"/>
</dbReference>
<dbReference type="Pfam" id="PF14008">
    <property type="entry name" value="Metallophos_C"/>
    <property type="match status" value="1"/>
</dbReference>
<dbReference type="Pfam" id="PF16656">
    <property type="entry name" value="Pur_ac_phosph_N"/>
    <property type="match status" value="1"/>
</dbReference>
<dbReference type="SUPFAM" id="SSF56300">
    <property type="entry name" value="Metallo-dependent phosphatases"/>
    <property type="match status" value="1"/>
</dbReference>
<dbReference type="SUPFAM" id="SSF49363">
    <property type="entry name" value="Purple acid phosphatase, N-terminal domain"/>
    <property type="match status" value="1"/>
</dbReference>
<protein>
    <recommendedName>
        <fullName evidence="5">Acid phosphatase A</fullName>
        <ecNumber evidence="4">3.1.3.2</ecNumber>
    </recommendedName>
</protein>
<accession>A0A9P5CTI1</accession>
<organism>
    <name type="scientific">Cryphonectria parasitica (strain ATCC 38755 / EP155)</name>
    <dbReference type="NCBI Taxonomy" id="660469"/>
    <lineage>
        <taxon>Eukaryota</taxon>
        <taxon>Fungi</taxon>
        <taxon>Dikarya</taxon>
        <taxon>Ascomycota</taxon>
        <taxon>Pezizomycotina</taxon>
        <taxon>Sordariomycetes</taxon>
        <taxon>Sordariomycetidae</taxon>
        <taxon>Diaporthales</taxon>
        <taxon>Cryphonectriaceae</taxon>
        <taxon>Cryphonectria-Endothia species complex</taxon>
        <taxon>Cryphonectria</taxon>
    </lineage>
</organism>
<evidence type="ECO:0000250" key="1">
    <source>
        <dbReference type="UniProtKB" id="P83380"/>
    </source>
</evidence>
<evidence type="ECO:0000255" key="2"/>
<evidence type="ECO:0000255" key="3">
    <source>
        <dbReference type="PROSITE-ProRule" id="PRU00498"/>
    </source>
</evidence>
<evidence type="ECO:0000269" key="4">
    <source>
    </source>
</evidence>
<evidence type="ECO:0000303" key="5">
    <source>
    </source>
</evidence>
<evidence type="ECO:0000305" key="6"/>
<keyword id="KW-0325">Glycoprotein</keyword>
<keyword id="KW-0378">Hydrolase</keyword>
<keyword id="KW-1185">Reference proteome</keyword>
<keyword id="KW-0964">Secreted</keyword>
<keyword id="KW-0732">Signal</keyword>